<dbReference type="EMBL" id="BC043453">
    <property type="protein sequence ID" value="AAH43453.1"/>
    <property type="molecule type" value="mRNA"/>
</dbReference>
<dbReference type="EMBL" id="AK075945">
    <property type="protein sequence ID" value="BAC36074.1"/>
    <property type="molecule type" value="mRNA"/>
</dbReference>
<dbReference type="EMBL" id="AK077401">
    <property type="protein sequence ID" value="BAC36784.1"/>
    <property type="molecule type" value="mRNA"/>
</dbReference>
<dbReference type="EMBL" id="AK145060">
    <property type="protein sequence ID" value="BAE26212.1"/>
    <property type="molecule type" value="mRNA"/>
</dbReference>
<dbReference type="EMBL" id="AK156529">
    <property type="protein sequence ID" value="BAE33745.1"/>
    <property type="molecule type" value="mRNA"/>
</dbReference>
<dbReference type="CCDS" id="CCDS25894.1">
    <molecule id="E9Q6D6-2"/>
</dbReference>
<dbReference type="CCDS" id="CCDS36435.1">
    <molecule id="E9Q6D6-1"/>
</dbReference>
<dbReference type="RefSeq" id="NP_766163.2">
    <molecule id="E9Q6D6-1"/>
    <property type="nucleotide sequence ID" value="NM_172575.3"/>
</dbReference>
<dbReference type="RefSeq" id="NP_849173.2">
    <molecule id="E9Q6D6-2"/>
    <property type="nucleotide sequence ID" value="NM_178845.3"/>
</dbReference>
<dbReference type="SMR" id="E9Q6D6"/>
<dbReference type="FunCoup" id="E9Q6D6">
    <property type="interactions" value="175"/>
</dbReference>
<dbReference type="IntAct" id="E9Q6D6">
    <property type="interactions" value="4"/>
</dbReference>
<dbReference type="STRING" id="10090.ENSMUSP00000064226"/>
<dbReference type="iPTMnet" id="E9Q6D6"/>
<dbReference type="PhosphoSitePlus" id="E9Q6D6"/>
<dbReference type="PaxDb" id="10090-ENSMUSP00000064226"/>
<dbReference type="PeptideAtlas" id="E9Q6D6"/>
<dbReference type="ProteomicsDB" id="335213"/>
<dbReference type="ProteomicsDB" id="363643"/>
<dbReference type="Antibodypedia" id="17357">
    <property type="antibodies" value="100 antibodies from 23 providers"/>
</dbReference>
<dbReference type="DNASU" id="246196"/>
<dbReference type="Ensembl" id="ENSMUST00000069637.15">
    <molecule id="E9Q6D6-2"/>
    <property type="protein sequence ID" value="ENSMUSP00000068032.8"/>
    <property type="gene ID" value="ENSMUSG00000055917.16"/>
</dbReference>
<dbReference type="Ensembl" id="ENSMUST00000069692.10">
    <molecule id="E9Q6D6-1"/>
    <property type="protein sequence ID" value="ENSMUSP00000064226.9"/>
    <property type="gene ID" value="ENSMUSG00000055917.16"/>
</dbReference>
<dbReference type="GeneID" id="246196"/>
<dbReference type="KEGG" id="mmu:246196"/>
<dbReference type="UCSC" id="uc007nla.2">
    <molecule id="E9Q6D6-1"/>
    <property type="organism name" value="mouse"/>
</dbReference>
<dbReference type="AGR" id="MGI:1890393"/>
<dbReference type="CTD" id="246196"/>
<dbReference type="MGI" id="MGI:1890393">
    <property type="gene designation" value="Zfp277"/>
</dbReference>
<dbReference type="VEuPathDB" id="HostDB:ENSMUSG00000055917"/>
<dbReference type="eggNOG" id="KOG2482">
    <property type="taxonomic scope" value="Eukaryota"/>
</dbReference>
<dbReference type="GeneTree" id="ENSGT00390000010852"/>
<dbReference type="HOGENOM" id="CLU_033436_0_0_1"/>
<dbReference type="InParanoid" id="E9Q6D6"/>
<dbReference type="OMA" id="NEDENDW"/>
<dbReference type="OrthoDB" id="278606at2759"/>
<dbReference type="PhylomeDB" id="E9Q6D6"/>
<dbReference type="TreeFam" id="TF318036"/>
<dbReference type="BioGRID-ORCS" id="246196">
    <property type="hits" value="2 hits in 78 CRISPR screens"/>
</dbReference>
<dbReference type="ChiTaRS" id="Zfp277">
    <property type="organism name" value="mouse"/>
</dbReference>
<dbReference type="PRO" id="PR:E9Q6D6"/>
<dbReference type="Proteomes" id="UP000000589">
    <property type="component" value="Chromosome 12"/>
</dbReference>
<dbReference type="RNAct" id="E9Q6D6">
    <property type="molecule type" value="protein"/>
</dbReference>
<dbReference type="Bgee" id="ENSMUSG00000055917">
    <property type="expression patterns" value="Expressed in primary oocyte and 256 other cell types or tissues"/>
</dbReference>
<dbReference type="ExpressionAtlas" id="E9Q6D6">
    <property type="expression patterns" value="baseline and differential"/>
</dbReference>
<dbReference type="GO" id="GO:0005694">
    <property type="term" value="C:chromosome"/>
    <property type="evidence" value="ECO:0007669"/>
    <property type="project" value="UniProtKB-SubCell"/>
</dbReference>
<dbReference type="GO" id="GO:0005737">
    <property type="term" value="C:cytoplasm"/>
    <property type="evidence" value="ECO:0007669"/>
    <property type="project" value="UniProtKB-SubCell"/>
</dbReference>
<dbReference type="GO" id="GO:0005730">
    <property type="term" value="C:nucleolus"/>
    <property type="evidence" value="ECO:0007669"/>
    <property type="project" value="UniProtKB-SubCell"/>
</dbReference>
<dbReference type="GO" id="GO:0000978">
    <property type="term" value="F:RNA polymerase II cis-regulatory region sequence-specific DNA binding"/>
    <property type="evidence" value="ECO:0000314"/>
    <property type="project" value="MGI"/>
</dbReference>
<dbReference type="GO" id="GO:0008270">
    <property type="term" value="F:zinc ion binding"/>
    <property type="evidence" value="ECO:0007669"/>
    <property type="project" value="UniProtKB-KW"/>
</dbReference>
<dbReference type="GO" id="GO:0070301">
    <property type="term" value="P:cellular response to hydrogen peroxide"/>
    <property type="evidence" value="ECO:0000315"/>
    <property type="project" value="MGI"/>
</dbReference>
<dbReference type="GO" id="GO:2000772">
    <property type="term" value="P:regulation of cellular senescence"/>
    <property type="evidence" value="ECO:0000315"/>
    <property type="project" value="MGI"/>
</dbReference>
<dbReference type="FunFam" id="3.30.160.60:FF:003610">
    <property type="entry name" value="Zinc finger protein 277"/>
    <property type="match status" value="1"/>
</dbReference>
<dbReference type="Gene3D" id="3.30.160.60">
    <property type="entry name" value="Classic Zinc Finger"/>
    <property type="match status" value="2"/>
</dbReference>
<dbReference type="InterPro" id="IPR041661">
    <property type="entry name" value="ZN622/Rei1/Reh1_Znf-C2H2"/>
</dbReference>
<dbReference type="InterPro" id="IPR040048">
    <property type="entry name" value="ZNF277"/>
</dbReference>
<dbReference type="InterPro" id="IPR036236">
    <property type="entry name" value="Znf_C2H2_sf"/>
</dbReference>
<dbReference type="InterPro" id="IPR013087">
    <property type="entry name" value="Znf_C2H2_type"/>
</dbReference>
<dbReference type="PANTHER" id="PTHR13267">
    <property type="entry name" value="ZINC FINGER PROTEIN 277"/>
    <property type="match status" value="1"/>
</dbReference>
<dbReference type="PANTHER" id="PTHR13267:SF3">
    <property type="entry name" value="ZINC FINGER PROTEIN 277"/>
    <property type="match status" value="1"/>
</dbReference>
<dbReference type="Pfam" id="PF12756">
    <property type="entry name" value="zf-C2H2_2"/>
    <property type="match status" value="2"/>
</dbReference>
<dbReference type="SMART" id="SM00355">
    <property type="entry name" value="ZnF_C2H2"/>
    <property type="match status" value="5"/>
</dbReference>
<dbReference type="SUPFAM" id="SSF57667">
    <property type="entry name" value="beta-beta-alpha zinc fingers"/>
    <property type="match status" value="2"/>
</dbReference>
<dbReference type="PROSITE" id="PS00028">
    <property type="entry name" value="ZINC_FINGER_C2H2_1"/>
    <property type="match status" value="2"/>
</dbReference>
<dbReference type="PROSITE" id="PS50157">
    <property type="entry name" value="ZINC_FINGER_C2H2_2"/>
    <property type="match status" value="2"/>
</dbReference>
<proteinExistence type="evidence at protein level"/>
<evidence type="ECO:0000250" key="1">
    <source>
        <dbReference type="UniProtKB" id="Q9NRM2"/>
    </source>
</evidence>
<evidence type="ECO:0000255" key="2">
    <source>
        <dbReference type="PROSITE-ProRule" id="PRU00042"/>
    </source>
</evidence>
<evidence type="ECO:0000269" key="3">
    <source>
    </source>
</evidence>
<evidence type="ECO:0000305" key="4"/>
<evidence type="ECO:0000312" key="5">
    <source>
        <dbReference type="EMBL" id="AAH43453.1"/>
    </source>
</evidence>
<evidence type="ECO:0000312" key="6">
    <source>
        <dbReference type="EMBL" id="BAC36074.1"/>
    </source>
</evidence>
<evidence type="ECO:0000312" key="7">
    <source>
        <dbReference type="EMBL" id="BAC36784.1"/>
    </source>
</evidence>
<evidence type="ECO:0000312" key="8">
    <source>
        <dbReference type="EMBL" id="BAE26212.1"/>
    </source>
</evidence>
<evidence type="ECO:0000312" key="9">
    <source>
        <dbReference type="EMBL" id="BAE33745.1"/>
    </source>
</evidence>
<evidence type="ECO:0000312" key="10">
    <source>
        <dbReference type="MGI" id="MGI:1890393"/>
    </source>
</evidence>
<evidence type="ECO:0000312" key="11">
    <source>
        <dbReference type="Proteomes" id="UP000000589"/>
    </source>
</evidence>
<sequence>MAASEVQGLPVDPREAGVRGVRGGIGHTDHEGHLGSFQLLATINKAAMNIVEHVSFLPVGTSSGYIAASSGITMSNFLRNRQTDFQSGCTSLQSHQQWRSVPLSPHPHQHLLSPEFLILAILTGVRWNLRIALICISLMIKDAEHFFRCFSAIWYSSDSKDCILEPLSLPESPGGTTALEGSPSVPCIFCEEHFPMAEQDKLLKHMIIEHKIVIADVKLVADFRRYILYWRKRFTEQPITDFCSVIRINSTAPFEEQDNYYLLCDALPEDRILREELQKHKLKEVLDQQQRERNDTSFHGVCMFCSEEFRGNRSVLLNHMAREHAFNIGLPDNIVNCAEFLCTLQKKLDNLQCLYCEKTFRDKNTLKDHMRKKQHRRINPKNREYDRFYVINYLELGKSWEEVQSEDDRELLDLQEDDWSDWQEYPVSAVCLFCEKQEETIDKLYVHMKDTHEFDLLRIKSELGLNFYQQVKLVNFIRRQVHQCKCYSCHVKFKSKADLRTHMEDTKHTSLLPDRKTWDQLEYYFPTYENDTLLCTLSDSESDLTAQEQTENVPVISEDTSRLCALKQSSVLNQLLLQGCLEN</sequence>
<reference evidence="6 7 8 9" key="1">
    <citation type="journal article" date="2005" name="Science">
        <title>The transcriptional landscape of the mammalian genome.</title>
        <authorList>
            <person name="Carninci P."/>
            <person name="Kasukawa T."/>
            <person name="Katayama S."/>
            <person name="Gough J."/>
            <person name="Frith M.C."/>
            <person name="Maeda N."/>
            <person name="Oyama R."/>
            <person name="Ravasi T."/>
            <person name="Lenhard B."/>
            <person name="Wells C."/>
            <person name="Kodzius R."/>
            <person name="Shimokawa K."/>
            <person name="Bajic V.B."/>
            <person name="Brenner S.E."/>
            <person name="Batalov S."/>
            <person name="Forrest A.R."/>
            <person name="Zavolan M."/>
            <person name="Davis M.J."/>
            <person name="Wilming L.G."/>
            <person name="Aidinis V."/>
            <person name="Allen J.E."/>
            <person name="Ambesi-Impiombato A."/>
            <person name="Apweiler R."/>
            <person name="Aturaliya R.N."/>
            <person name="Bailey T.L."/>
            <person name="Bansal M."/>
            <person name="Baxter L."/>
            <person name="Beisel K.W."/>
            <person name="Bersano T."/>
            <person name="Bono H."/>
            <person name="Chalk A.M."/>
            <person name="Chiu K.P."/>
            <person name="Choudhary V."/>
            <person name="Christoffels A."/>
            <person name="Clutterbuck D.R."/>
            <person name="Crowe M.L."/>
            <person name="Dalla E."/>
            <person name="Dalrymple B.P."/>
            <person name="de Bono B."/>
            <person name="Della Gatta G."/>
            <person name="di Bernardo D."/>
            <person name="Down T."/>
            <person name="Engstrom P."/>
            <person name="Fagiolini M."/>
            <person name="Faulkner G."/>
            <person name="Fletcher C.F."/>
            <person name="Fukushima T."/>
            <person name="Furuno M."/>
            <person name="Futaki S."/>
            <person name="Gariboldi M."/>
            <person name="Georgii-Hemming P."/>
            <person name="Gingeras T.R."/>
            <person name="Gojobori T."/>
            <person name="Green R.E."/>
            <person name="Gustincich S."/>
            <person name="Harbers M."/>
            <person name="Hayashi Y."/>
            <person name="Hensch T.K."/>
            <person name="Hirokawa N."/>
            <person name="Hill D."/>
            <person name="Huminiecki L."/>
            <person name="Iacono M."/>
            <person name="Ikeo K."/>
            <person name="Iwama A."/>
            <person name="Ishikawa T."/>
            <person name="Jakt M."/>
            <person name="Kanapin A."/>
            <person name="Katoh M."/>
            <person name="Kawasawa Y."/>
            <person name="Kelso J."/>
            <person name="Kitamura H."/>
            <person name="Kitano H."/>
            <person name="Kollias G."/>
            <person name="Krishnan S.P."/>
            <person name="Kruger A."/>
            <person name="Kummerfeld S.K."/>
            <person name="Kurochkin I.V."/>
            <person name="Lareau L.F."/>
            <person name="Lazarevic D."/>
            <person name="Lipovich L."/>
            <person name="Liu J."/>
            <person name="Liuni S."/>
            <person name="McWilliam S."/>
            <person name="Madan Babu M."/>
            <person name="Madera M."/>
            <person name="Marchionni L."/>
            <person name="Matsuda H."/>
            <person name="Matsuzawa S."/>
            <person name="Miki H."/>
            <person name="Mignone F."/>
            <person name="Miyake S."/>
            <person name="Morris K."/>
            <person name="Mottagui-Tabar S."/>
            <person name="Mulder N."/>
            <person name="Nakano N."/>
            <person name="Nakauchi H."/>
            <person name="Ng P."/>
            <person name="Nilsson R."/>
            <person name="Nishiguchi S."/>
            <person name="Nishikawa S."/>
            <person name="Nori F."/>
            <person name="Ohara O."/>
            <person name="Okazaki Y."/>
            <person name="Orlando V."/>
            <person name="Pang K.C."/>
            <person name="Pavan W.J."/>
            <person name="Pavesi G."/>
            <person name="Pesole G."/>
            <person name="Petrovsky N."/>
            <person name="Piazza S."/>
            <person name="Reed J."/>
            <person name="Reid J.F."/>
            <person name="Ring B.Z."/>
            <person name="Ringwald M."/>
            <person name="Rost B."/>
            <person name="Ruan Y."/>
            <person name="Salzberg S.L."/>
            <person name="Sandelin A."/>
            <person name="Schneider C."/>
            <person name="Schoenbach C."/>
            <person name="Sekiguchi K."/>
            <person name="Semple C.A."/>
            <person name="Seno S."/>
            <person name="Sessa L."/>
            <person name="Sheng Y."/>
            <person name="Shibata Y."/>
            <person name="Shimada H."/>
            <person name="Shimada K."/>
            <person name="Silva D."/>
            <person name="Sinclair B."/>
            <person name="Sperling S."/>
            <person name="Stupka E."/>
            <person name="Sugiura K."/>
            <person name="Sultana R."/>
            <person name="Takenaka Y."/>
            <person name="Taki K."/>
            <person name="Tammoja K."/>
            <person name="Tan S.L."/>
            <person name="Tang S."/>
            <person name="Taylor M.S."/>
            <person name="Tegner J."/>
            <person name="Teichmann S.A."/>
            <person name="Ueda H.R."/>
            <person name="van Nimwegen E."/>
            <person name="Verardo R."/>
            <person name="Wei C.L."/>
            <person name="Yagi K."/>
            <person name="Yamanishi H."/>
            <person name="Zabarovsky E."/>
            <person name="Zhu S."/>
            <person name="Zimmer A."/>
            <person name="Hide W."/>
            <person name="Bult C."/>
            <person name="Grimmond S.M."/>
            <person name="Teasdale R.D."/>
            <person name="Liu E.T."/>
            <person name="Brusic V."/>
            <person name="Quackenbush J."/>
            <person name="Wahlestedt C."/>
            <person name="Mattick J.S."/>
            <person name="Hume D.A."/>
            <person name="Kai C."/>
            <person name="Sasaki D."/>
            <person name="Tomaru Y."/>
            <person name="Fukuda S."/>
            <person name="Kanamori-Katayama M."/>
            <person name="Suzuki M."/>
            <person name="Aoki J."/>
            <person name="Arakawa T."/>
            <person name="Iida J."/>
            <person name="Imamura K."/>
            <person name="Itoh M."/>
            <person name="Kato T."/>
            <person name="Kawaji H."/>
            <person name="Kawagashira N."/>
            <person name="Kawashima T."/>
            <person name="Kojima M."/>
            <person name="Kondo S."/>
            <person name="Konno H."/>
            <person name="Nakano K."/>
            <person name="Ninomiya N."/>
            <person name="Nishio T."/>
            <person name="Okada M."/>
            <person name="Plessy C."/>
            <person name="Shibata K."/>
            <person name="Shiraki T."/>
            <person name="Suzuki S."/>
            <person name="Tagami M."/>
            <person name="Waki K."/>
            <person name="Watahiki A."/>
            <person name="Okamura-Oho Y."/>
            <person name="Suzuki H."/>
            <person name="Kawai J."/>
            <person name="Hayashizaki Y."/>
        </authorList>
    </citation>
    <scope>NUCLEOTIDE SEQUENCE [LARGE SCALE MRNA]</scope>
    <source>
        <strain evidence="7">C57BL/6J</strain>
        <strain evidence="9">NOD</strain>
        <tissue evidence="6">Embryonic stem cell</tissue>
        <tissue evidence="7">Head</tissue>
        <tissue evidence="8">Mammary gland</tissue>
        <tissue evidence="9">Spleen</tissue>
    </source>
</reference>
<reference evidence="11" key="2">
    <citation type="journal article" date="2009" name="PLoS Biol.">
        <title>Lineage-specific biology revealed by a finished genome assembly of the mouse.</title>
        <authorList>
            <person name="Church D.M."/>
            <person name="Goodstadt L."/>
            <person name="Hillier L.W."/>
            <person name="Zody M.C."/>
            <person name="Goldstein S."/>
            <person name="She X."/>
            <person name="Bult C.J."/>
            <person name="Agarwala R."/>
            <person name="Cherry J.L."/>
            <person name="DiCuccio M."/>
            <person name="Hlavina W."/>
            <person name="Kapustin Y."/>
            <person name="Meric P."/>
            <person name="Maglott D."/>
            <person name="Birtle Z."/>
            <person name="Marques A.C."/>
            <person name="Graves T."/>
            <person name="Zhou S."/>
            <person name="Teague B."/>
            <person name="Potamousis K."/>
            <person name="Churas C."/>
            <person name="Place M."/>
            <person name="Herschleb J."/>
            <person name="Runnheim R."/>
            <person name="Forrest D."/>
            <person name="Amos-Landgraf J."/>
            <person name="Schwartz D.C."/>
            <person name="Cheng Z."/>
            <person name="Lindblad-Toh K."/>
            <person name="Eichler E.E."/>
            <person name="Ponting C.P."/>
        </authorList>
    </citation>
    <scope>NUCLEOTIDE SEQUENCE [LARGE SCALE GENOMIC DNA]</scope>
    <source>
        <strain evidence="11">C57BL/6J</strain>
    </source>
</reference>
<reference evidence="5" key="3">
    <citation type="journal article" date="2004" name="Genome Res.">
        <title>The status, quality, and expansion of the NIH full-length cDNA project: the Mammalian Gene Collection (MGC).</title>
        <authorList>
            <consortium name="The MGC Project Team"/>
        </authorList>
    </citation>
    <scope>NUCLEOTIDE SEQUENCE [LARGE SCALE MRNA] (ISOFORM 2)</scope>
    <source>
        <strain evidence="5">FVB/N-3</strain>
        <tissue evidence="5">Mammary cancer</tissue>
    </source>
</reference>
<reference evidence="4" key="4">
    <citation type="journal article" date="2010" name="PLoS ONE">
        <title>A novel zinc finger protein Zfp277 mediates transcriptional repression of the Ink4a/arf locus through polycomb repressive complex 1.</title>
        <authorList>
            <person name="Negishi M."/>
            <person name="Saraya A."/>
            <person name="Mochizuki S."/>
            <person name="Helin K."/>
            <person name="Koseki H."/>
            <person name="Iwama A."/>
        </authorList>
    </citation>
    <scope>FUNCTION</scope>
    <scope>INTERACTION WITH BMI1</scope>
    <scope>INDUCTION</scope>
</reference>
<feature type="chain" id="PRO_0000455248" description="Zinc finger protein 277">
    <location>
        <begin position="1"/>
        <end position="583"/>
    </location>
</feature>
<feature type="zinc finger region" description="C2H2-type 1" evidence="2">
    <location>
        <begin position="351"/>
        <end position="375"/>
    </location>
</feature>
<feature type="zinc finger region" description="C2H2-type 2" evidence="2">
    <location>
        <begin position="482"/>
        <end position="508"/>
    </location>
</feature>
<feature type="splice variant" id="VSP_061466" description="In isoform 2." evidence="4">
    <location>
        <begin position="32"/>
        <end position="157"/>
    </location>
</feature>
<feature type="sequence conflict" description="In Ref. 3; AAH43453 and 1; BAE26212." evidence="4" ref="3 1">
    <original>T</original>
    <variation>A</variation>
    <location>
        <position position="177"/>
    </location>
</feature>
<feature type="sequence conflict" description="In Ref. 1; BAC36074." evidence="4" ref="1">
    <original>N</original>
    <variation>K</variation>
    <location>
        <position position="294"/>
    </location>
</feature>
<feature type="sequence conflict" description="In Ref. 1; BAE26212." evidence="4" ref="1">
    <original>A</original>
    <variation>T</variation>
    <location>
        <position position="338"/>
    </location>
</feature>
<feature type="sequence conflict" description="In Ref. 1; BAC36784." evidence="4" ref="1">
    <original>E</original>
    <variation>K</variation>
    <location>
        <position position="395"/>
    </location>
</feature>
<keyword id="KW-0025">Alternative splicing</keyword>
<keyword id="KW-0158">Chromosome</keyword>
<keyword id="KW-0963">Cytoplasm</keyword>
<keyword id="KW-0479">Metal-binding</keyword>
<keyword id="KW-0539">Nucleus</keyword>
<keyword id="KW-1185">Reference proteome</keyword>
<keyword id="KW-0677">Repeat</keyword>
<keyword id="KW-0804">Transcription</keyword>
<keyword id="KW-0805">Transcription regulation</keyword>
<keyword id="KW-0862">Zinc</keyword>
<keyword id="KW-0863">Zinc-finger</keyword>
<gene>
    <name evidence="1" type="primary">Znf277</name>
    <name evidence="10" type="synonym">Zfp277</name>
</gene>
<accession>E9Q6D6</accession>
<accession>Q3U0V6</accession>
<accession>Q3UM86</accession>
<accession>Q80UK2</accession>
<accession>Q8BVL5</accession>
<accession>Q8BVX7</accession>
<organism evidence="11">
    <name type="scientific">Mus musculus</name>
    <name type="common">Mouse</name>
    <dbReference type="NCBI Taxonomy" id="10090"/>
    <lineage>
        <taxon>Eukaryota</taxon>
        <taxon>Metazoa</taxon>
        <taxon>Chordata</taxon>
        <taxon>Craniata</taxon>
        <taxon>Vertebrata</taxon>
        <taxon>Euteleostomi</taxon>
        <taxon>Mammalia</taxon>
        <taxon>Eutheria</taxon>
        <taxon>Euarchontoglires</taxon>
        <taxon>Glires</taxon>
        <taxon>Rodentia</taxon>
        <taxon>Myomorpha</taxon>
        <taxon>Muroidea</taxon>
        <taxon>Muridae</taxon>
        <taxon>Murinae</taxon>
        <taxon>Mus</taxon>
        <taxon>Mus</taxon>
    </lineage>
</organism>
<name>ZN277_MOUSE</name>
<comment type="function">
    <text evidence="3">Probable transcription factor (PubMed:20808772). Involved in modulation of cellular senescence; represses transcription of the tumor suppressor gene INK4A/ARF, perhaps acting via the Polycomb group (PcG) complex PRC1 (PubMed:20808772).</text>
</comment>
<comment type="subunit">
    <text evidence="1 3">Interacts (via zinc-finger domains) with RPS2/40S ribosomal protein S2, perhaps as nascent RPS2 is synthesized during translation; the interaction is direct; the interaction is extra-ribosomal. Interaction with RPS2 competes with the binding of RPS2 to protein arginine methyltransferase PRMT3 (By similarity). Interacts with Polycomb group (PcG) complex protein BMI1 (PubMed:20808772). May be part of a complex including at least ZNF277, BMI1 and RNF2/RING2 (PubMed:20808772).</text>
</comment>
<comment type="subcellular location">
    <subcellularLocation>
        <location evidence="1">Nucleus</location>
    </subcellularLocation>
    <subcellularLocation>
        <location evidence="1">Cytoplasm</location>
    </subcellularLocation>
    <subcellularLocation>
        <location evidence="1">Nucleus</location>
        <location evidence="1">Nucleolus</location>
    </subcellularLocation>
    <subcellularLocation>
        <location evidence="3">Chromosome</location>
    </subcellularLocation>
    <text evidence="1">Probably localized to nucleolus and cytoplasm in complex with 40S ribosomal protein S2/RPS2.</text>
</comment>
<comment type="alternative products">
    <event type="alternative splicing"/>
    <isoform>
        <id>E9Q6D6-1</id>
        <name>1</name>
        <sequence type="displayed"/>
    </isoform>
    <isoform>
        <id>E9Q6D6-2</id>
        <name>2</name>
        <sequence type="described" ref="VSP_061466"/>
    </isoform>
</comment>
<comment type="induction">
    <text evidence="3">Down-regulated by oxidative stress.</text>
</comment>
<comment type="similarity">
    <text evidence="4">Belongs to the ZNF277 family.</text>
</comment>
<protein>
    <recommendedName>
        <fullName evidence="10">Zinc finger protein 277</fullName>
    </recommendedName>
</protein>